<organism>
    <name type="scientific">Campylobacter jejuni subsp. doylei (strain ATCC BAA-1458 / RM4099 / 269.97)</name>
    <dbReference type="NCBI Taxonomy" id="360109"/>
    <lineage>
        <taxon>Bacteria</taxon>
        <taxon>Pseudomonadati</taxon>
        <taxon>Campylobacterota</taxon>
        <taxon>Epsilonproteobacteria</taxon>
        <taxon>Campylobacterales</taxon>
        <taxon>Campylobacteraceae</taxon>
        <taxon>Campylobacter</taxon>
    </lineage>
</organism>
<proteinExistence type="inferred from homology"/>
<dbReference type="EC" id="2.3.1.129" evidence="1"/>
<dbReference type="EMBL" id="CP000768">
    <property type="protein sequence ID" value="ABS44537.1"/>
    <property type="molecule type" value="Genomic_DNA"/>
</dbReference>
<dbReference type="SMR" id="A7H597"/>
<dbReference type="KEGG" id="cjd:JJD26997_1696"/>
<dbReference type="HOGENOM" id="CLU_061249_0_0_7"/>
<dbReference type="UniPathway" id="UPA00359">
    <property type="reaction ID" value="UER00477"/>
</dbReference>
<dbReference type="Proteomes" id="UP000002302">
    <property type="component" value="Chromosome"/>
</dbReference>
<dbReference type="GO" id="GO:0005737">
    <property type="term" value="C:cytoplasm"/>
    <property type="evidence" value="ECO:0007669"/>
    <property type="project" value="UniProtKB-SubCell"/>
</dbReference>
<dbReference type="GO" id="GO:0016020">
    <property type="term" value="C:membrane"/>
    <property type="evidence" value="ECO:0007669"/>
    <property type="project" value="GOC"/>
</dbReference>
<dbReference type="GO" id="GO:0008780">
    <property type="term" value="F:acyl-[acyl-carrier-protein]-UDP-N-acetylglucosamine O-acyltransferase activity"/>
    <property type="evidence" value="ECO:0007669"/>
    <property type="project" value="UniProtKB-UniRule"/>
</dbReference>
<dbReference type="GO" id="GO:0009245">
    <property type="term" value="P:lipid A biosynthetic process"/>
    <property type="evidence" value="ECO:0007669"/>
    <property type="project" value="UniProtKB-UniRule"/>
</dbReference>
<dbReference type="CDD" id="cd03351">
    <property type="entry name" value="LbH_UDP-GlcNAc_AT"/>
    <property type="match status" value="1"/>
</dbReference>
<dbReference type="Gene3D" id="2.160.10.10">
    <property type="entry name" value="Hexapeptide repeat proteins"/>
    <property type="match status" value="1"/>
</dbReference>
<dbReference type="Gene3D" id="1.20.1180.10">
    <property type="entry name" value="Udp N-acetylglucosamine O-acyltransferase, C-terminal domain"/>
    <property type="match status" value="1"/>
</dbReference>
<dbReference type="HAMAP" id="MF_00387">
    <property type="entry name" value="LpxA"/>
    <property type="match status" value="1"/>
</dbReference>
<dbReference type="InterPro" id="IPR029098">
    <property type="entry name" value="Acetyltransf_C"/>
</dbReference>
<dbReference type="InterPro" id="IPR037157">
    <property type="entry name" value="Acetyltransf_C_sf"/>
</dbReference>
<dbReference type="InterPro" id="IPR001451">
    <property type="entry name" value="Hexapep"/>
</dbReference>
<dbReference type="InterPro" id="IPR018357">
    <property type="entry name" value="Hexapep_transf_CS"/>
</dbReference>
<dbReference type="InterPro" id="IPR010137">
    <property type="entry name" value="Lipid_A_LpxA"/>
</dbReference>
<dbReference type="InterPro" id="IPR011004">
    <property type="entry name" value="Trimer_LpxA-like_sf"/>
</dbReference>
<dbReference type="NCBIfam" id="TIGR01852">
    <property type="entry name" value="lipid_A_lpxA"/>
    <property type="match status" value="1"/>
</dbReference>
<dbReference type="NCBIfam" id="NF003657">
    <property type="entry name" value="PRK05289.1"/>
    <property type="match status" value="1"/>
</dbReference>
<dbReference type="PANTHER" id="PTHR43480">
    <property type="entry name" value="ACYL-[ACYL-CARRIER-PROTEIN]--UDP-N-ACETYLGLUCOSAMINE O-ACYLTRANSFERASE"/>
    <property type="match status" value="1"/>
</dbReference>
<dbReference type="PANTHER" id="PTHR43480:SF1">
    <property type="entry name" value="ACYL-[ACYL-CARRIER-PROTEIN]--UDP-N-ACETYLGLUCOSAMINE O-ACYLTRANSFERASE, MITOCHONDRIAL-RELATED"/>
    <property type="match status" value="1"/>
</dbReference>
<dbReference type="Pfam" id="PF13720">
    <property type="entry name" value="Acetyltransf_11"/>
    <property type="match status" value="1"/>
</dbReference>
<dbReference type="Pfam" id="PF00132">
    <property type="entry name" value="Hexapep"/>
    <property type="match status" value="1"/>
</dbReference>
<dbReference type="PIRSF" id="PIRSF000456">
    <property type="entry name" value="UDP-GlcNAc_acltr"/>
    <property type="match status" value="1"/>
</dbReference>
<dbReference type="SUPFAM" id="SSF51161">
    <property type="entry name" value="Trimeric LpxA-like enzymes"/>
    <property type="match status" value="1"/>
</dbReference>
<dbReference type="PROSITE" id="PS00101">
    <property type="entry name" value="HEXAPEP_TRANSFERASES"/>
    <property type="match status" value="2"/>
</dbReference>
<keyword id="KW-0012">Acyltransferase</keyword>
<keyword id="KW-0963">Cytoplasm</keyword>
<keyword id="KW-0441">Lipid A biosynthesis</keyword>
<keyword id="KW-0444">Lipid biosynthesis</keyword>
<keyword id="KW-0443">Lipid metabolism</keyword>
<keyword id="KW-0677">Repeat</keyword>
<keyword id="KW-0808">Transferase</keyword>
<feature type="chain" id="PRO_1000013164" description="Acyl-[acyl-carrier-protein]--UDP-N-acetylglucosamine O-acyltransferase">
    <location>
        <begin position="1"/>
        <end position="263"/>
    </location>
</feature>
<name>LPXA_CAMJD</name>
<gene>
    <name evidence="1" type="primary">lpxA</name>
    <name type="ordered locus">JJD26997_1696</name>
</gene>
<sequence>MKKIHPSAVIEEGAQLGDDVVIEAYAYVGKDTKIGNDVIIKQGARILSDTTIGDHSRVFSYAIVGDIPQDISYKEEQKSGVVIGKNATIREFATINSGTAKGDGFTRIGDNAFIMAYCHIAHDCLLGNSIILANNATLAGHVELGDFTVVGGLTPIHQFVKIGEGCMIAGASALSQDIVPFCLAEGNRASIRSLNLVGIRRRFDKDEVDRLSRAFKTLFRQGDLKENAKNLLENQESENIKKMCHFILETKRGIPVYRGKNNA</sequence>
<accession>A7H597</accession>
<reference key="1">
    <citation type="submission" date="2007-07" db="EMBL/GenBank/DDBJ databases">
        <title>Complete genome sequence of Campylobacter jejuni subsp doylei 269.97 isolated from human blood.</title>
        <authorList>
            <person name="Fouts D.E."/>
            <person name="Mongodin E.F."/>
            <person name="Puiu D."/>
            <person name="Sebastian Y."/>
            <person name="Miller W.G."/>
            <person name="Mandrell R.E."/>
            <person name="Lastovica A.J."/>
            <person name="Nelson K.E."/>
        </authorList>
    </citation>
    <scope>NUCLEOTIDE SEQUENCE [LARGE SCALE GENOMIC DNA]</scope>
    <source>
        <strain>ATCC BAA-1458 / RM4099 / 269.97</strain>
    </source>
</reference>
<comment type="function">
    <text evidence="1">Involved in the biosynthesis of lipid A, a phosphorylated glycolipid that anchors the lipopolysaccharide to the outer membrane of the cell.</text>
</comment>
<comment type="catalytic activity">
    <reaction evidence="1">
        <text>a (3R)-hydroxyacyl-[ACP] + UDP-N-acetyl-alpha-D-glucosamine = a UDP-3-O-[(3R)-3-hydroxyacyl]-N-acetyl-alpha-D-glucosamine + holo-[ACP]</text>
        <dbReference type="Rhea" id="RHEA:67812"/>
        <dbReference type="Rhea" id="RHEA-COMP:9685"/>
        <dbReference type="Rhea" id="RHEA-COMP:9945"/>
        <dbReference type="ChEBI" id="CHEBI:57705"/>
        <dbReference type="ChEBI" id="CHEBI:64479"/>
        <dbReference type="ChEBI" id="CHEBI:78827"/>
        <dbReference type="ChEBI" id="CHEBI:173225"/>
        <dbReference type="EC" id="2.3.1.129"/>
    </reaction>
</comment>
<comment type="pathway">
    <text evidence="1">Glycolipid biosynthesis; lipid IV(A) biosynthesis; lipid IV(A) from (3R)-3-hydroxytetradecanoyl-[acyl-carrier-protein] and UDP-N-acetyl-alpha-D-glucosamine: step 1/6.</text>
</comment>
<comment type="subunit">
    <text evidence="1">Homotrimer.</text>
</comment>
<comment type="subcellular location">
    <subcellularLocation>
        <location evidence="1">Cytoplasm</location>
    </subcellularLocation>
</comment>
<comment type="similarity">
    <text evidence="1">Belongs to the transferase hexapeptide repeat family. LpxA subfamily.</text>
</comment>
<protein>
    <recommendedName>
        <fullName evidence="1">Acyl-[acyl-carrier-protein]--UDP-N-acetylglucosamine O-acyltransferase</fullName>
        <shortName evidence="1">UDP-N-acetylglucosamine acyltransferase</shortName>
        <ecNumber evidence="1">2.3.1.129</ecNumber>
    </recommendedName>
</protein>
<evidence type="ECO:0000255" key="1">
    <source>
        <dbReference type="HAMAP-Rule" id="MF_00387"/>
    </source>
</evidence>